<protein>
    <recommendedName>
        <fullName evidence="1">Homoserine kinase</fullName>
        <shortName evidence="1">HK</shortName>
        <shortName evidence="1">HSK</shortName>
        <ecNumber evidence="1">2.7.1.39</ecNumber>
    </recommendedName>
</protein>
<dbReference type="EC" id="2.7.1.39" evidence="1"/>
<dbReference type="EMBL" id="AM889285">
    <property type="protein sequence ID" value="CAP57044.1"/>
    <property type="molecule type" value="Genomic_DNA"/>
</dbReference>
<dbReference type="EMBL" id="CP001189">
    <property type="protein sequence ID" value="ACI52993.1"/>
    <property type="molecule type" value="Genomic_DNA"/>
</dbReference>
<dbReference type="RefSeq" id="WP_012227459.1">
    <property type="nucleotide sequence ID" value="NC_010125.1"/>
</dbReference>
<dbReference type="SMR" id="A9HS91"/>
<dbReference type="STRING" id="272568.GDI3101"/>
<dbReference type="KEGG" id="gdi:GDI3101"/>
<dbReference type="KEGG" id="gdj:Gdia_3266"/>
<dbReference type="eggNOG" id="COG2334">
    <property type="taxonomic scope" value="Bacteria"/>
</dbReference>
<dbReference type="HOGENOM" id="CLU_053300_1_0_5"/>
<dbReference type="OrthoDB" id="9777460at2"/>
<dbReference type="UniPathway" id="UPA00050">
    <property type="reaction ID" value="UER00064"/>
</dbReference>
<dbReference type="Proteomes" id="UP000001176">
    <property type="component" value="Chromosome"/>
</dbReference>
<dbReference type="GO" id="GO:0005524">
    <property type="term" value="F:ATP binding"/>
    <property type="evidence" value="ECO:0007669"/>
    <property type="project" value="UniProtKB-KW"/>
</dbReference>
<dbReference type="GO" id="GO:0004413">
    <property type="term" value="F:homoserine kinase activity"/>
    <property type="evidence" value="ECO:0007669"/>
    <property type="project" value="UniProtKB-UniRule"/>
</dbReference>
<dbReference type="GO" id="GO:0009088">
    <property type="term" value="P:threonine biosynthetic process"/>
    <property type="evidence" value="ECO:0007669"/>
    <property type="project" value="UniProtKB-UniRule"/>
</dbReference>
<dbReference type="CDD" id="cd05153">
    <property type="entry name" value="HomoserineK_II"/>
    <property type="match status" value="1"/>
</dbReference>
<dbReference type="Gene3D" id="3.90.1200.10">
    <property type="match status" value="1"/>
</dbReference>
<dbReference type="Gene3D" id="3.30.200.20">
    <property type="entry name" value="Phosphorylase Kinase, domain 1"/>
    <property type="match status" value="1"/>
</dbReference>
<dbReference type="HAMAP" id="MF_00301">
    <property type="entry name" value="Homoser_kinase_2"/>
    <property type="match status" value="1"/>
</dbReference>
<dbReference type="InterPro" id="IPR002575">
    <property type="entry name" value="Aminoglycoside_PTrfase"/>
</dbReference>
<dbReference type="InterPro" id="IPR005280">
    <property type="entry name" value="Homoserine_kinase_II"/>
</dbReference>
<dbReference type="InterPro" id="IPR011009">
    <property type="entry name" value="Kinase-like_dom_sf"/>
</dbReference>
<dbReference type="InterPro" id="IPR050249">
    <property type="entry name" value="Pseudomonas-type_ThrB"/>
</dbReference>
<dbReference type="NCBIfam" id="NF003558">
    <property type="entry name" value="PRK05231.1"/>
    <property type="match status" value="1"/>
</dbReference>
<dbReference type="NCBIfam" id="TIGR00938">
    <property type="entry name" value="thrB_alt"/>
    <property type="match status" value="1"/>
</dbReference>
<dbReference type="PANTHER" id="PTHR21064:SF6">
    <property type="entry name" value="AMINOGLYCOSIDE PHOSPHOTRANSFERASE DOMAIN-CONTAINING PROTEIN"/>
    <property type="match status" value="1"/>
</dbReference>
<dbReference type="PANTHER" id="PTHR21064">
    <property type="entry name" value="AMINOGLYCOSIDE PHOSPHOTRANSFERASE DOMAIN-CONTAINING PROTEIN-RELATED"/>
    <property type="match status" value="1"/>
</dbReference>
<dbReference type="Pfam" id="PF01636">
    <property type="entry name" value="APH"/>
    <property type="match status" value="1"/>
</dbReference>
<dbReference type="SUPFAM" id="SSF56112">
    <property type="entry name" value="Protein kinase-like (PK-like)"/>
    <property type="match status" value="1"/>
</dbReference>
<comment type="catalytic activity">
    <reaction evidence="1">
        <text>L-homoserine + ATP = O-phospho-L-homoserine + ADP + H(+)</text>
        <dbReference type="Rhea" id="RHEA:13985"/>
        <dbReference type="ChEBI" id="CHEBI:15378"/>
        <dbReference type="ChEBI" id="CHEBI:30616"/>
        <dbReference type="ChEBI" id="CHEBI:57476"/>
        <dbReference type="ChEBI" id="CHEBI:57590"/>
        <dbReference type="ChEBI" id="CHEBI:456216"/>
        <dbReference type="EC" id="2.7.1.39"/>
    </reaction>
</comment>
<comment type="pathway">
    <text evidence="1">Amino-acid biosynthesis; L-threonine biosynthesis; L-threonine from L-aspartate: step 4/5.</text>
</comment>
<comment type="similarity">
    <text evidence="1">Belongs to the pseudomonas-type ThrB family.</text>
</comment>
<proteinExistence type="inferred from homology"/>
<keyword id="KW-0028">Amino-acid biosynthesis</keyword>
<keyword id="KW-0067">ATP-binding</keyword>
<keyword id="KW-0418">Kinase</keyword>
<keyword id="KW-0547">Nucleotide-binding</keyword>
<keyword id="KW-1185">Reference proteome</keyword>
<keyword id="KW-0791">Threonine biosynthesis</keyword>
<keyword id="KW-0808">Transferase</keyword>
<accession>A9HS91</accession>
<accession>B5ZKL9</accession>
<name>KHSE_GLUDA</name>
<sequence>MAVYTDVSDGALRAFLSLYDIGDLTAYRGIAEGVENSNFVLRTTGGDFILTLYERRVDPADLPWFLGLMGCLSDHGLSCPRPVVARDGQALRTLAGRPAAITTFLPGVWPREVRVAHCAPVGAALAALHMAGQGFGAERANALGPDAWPGLVAACRADGDSVQPGLMAELDAALAEILPAWPARDDLPRGQIHADLFPDNVFFLDGAVSGIIDFYFACTDLLAYDIAICLNAWCFDADGTFDAARGRALIAGYESVRPLTDAERRALPVLAAGAATRFLLTRLYDWVNTPAGAMVTRKDPLDYLKRLRFHRAARNMASYGL</sequence>
<feature type="chain" id="PRO_1000079019" description="Homoserine kinase">
    <location>
        <begin position="1"/>
        <end position="321"/>
    </location>
</feature>
<organism>
    <name type="scientific">Gluconacetobacter diazotrophicus (strain ATCC 49037 / DSM 5601 / CCUG 37298 / CIP 103539 / LMG 7603 / PAl5)</name>
    <dbReference type="NCBI Taxonomy" id="272568"/>
    <lineage>
        <taxon>Bacteria</taxon>
        <taxon>Pseudomonadati</taxon>
        <taxon>Pseudomonadota</taxon>
        <taxon>Alphaproteobacteria</taxon>
        <taxon>Acetobacterales</taxon>
        <taxon>Acetobacteraceae</taxon>
        <taxon>Gluconacetobacter</taxon>
    </lineage>
</organism>
<reference key="1">
    <citation type="journal article" date="2009" name="BMC Genomics">
        <title>Complete genome sequence of the sugarcane nitrogen-fixing endophyte Gluconacetobacter diazotrophicus Pal5.</title>
        <authorList>
            <person name="Bertalan M."/>
            <person name="Albano R."/>
            <person name="de Padua V."/>
            <person name="Rouws L."/>
            <person name="Rojas C."/>
            <person name="Hemerly A."/>
            <person name="Teixeira K."/>
            <person name="Schwab S."/>
            <person name="Araujo J."/>
            <person name="Oliveira A."/>
            <person name="Franca L."/>
            <person name="Magalhaes V."/>
            <person name="Alqueres S."/>
            <person name="Cardoso A."/>
            <person name="Almeida W."/>
            <person name="Loureiro M.M."/>
            <person name="Nogueira E."/>
            <person name="Cidade D."/>
            <person name="Oliveira D."/>
            <person name="Simao T."/>
            <person name="Macedo J."/>
            <person name="Valadao A."/>
            <person name="Dreschsel M."/>
            <person name="Freitas F."/>
            <person name="Vidal M."/>
            <person name="Guedes H."/>
            <person name="Rodrigues E."/>
            <person name="Meneses C."/>
            <person name="Brioso P."/>
            <person name="Pozzer L."/>
            <person name="Figueiredo D."/>
            <person name="Montano H."/>
            <person name="Junior J."/>
            <person name="de Souza Filho G."/>
            <person name="Martin Quintana Flores V."/>
            <person name="Ferreira B."/>
            <person name="Branco A."/>
            <person name="Gonzalez P."/>
            <person name="Guillobel H."/>
            <person name="Lemos M."/>
            <person name="Seibel L."/>
            <person name="Macedo J."/>
            <person name="Alves-Ferreira M."/>
            <person name="Sachetto-Martins G."/>
            <person name="Coelho A."/>
            <person name="Santos E."/>
            <person name="Amaral G."/>
            <person name="Neves A."/>
            <person name="Pacheco A.B."/>
            <person name="Carvalho D."/>
            <person name="Lery L."/>
            <person name="Bisch P."/>
            <person name="Rossle S.C."/>
            <person name="Urmenyi T."/>
            <person name="Rael Pereira A."/>
            <person name="Silva R."/>
            <person name="Rondinelli E."/>
            <person name="von Kruger W."/>
            <person name="Martins O."/>
            <person name="Baldani J.I."/>
            <person name="Ferreira P.C."/>
        </authorList>
    </citation>
    <scope>NUCLEOTIDE SEQUENCE [LARGE SCALE GENOMIC DNA]</scope>
    <source>
        <strain>ATCC 49037 / DSM 5601 / CCUG 37298 / CIP 103539 / LMG 7603 / PAl5</strain>
    </source>
</reference>
<reference key="2">
    <citation type="journal article" date="2010" name="Stand. Genomic Sci.">
        <title>Two genome sequences of the same bacterial strain, Gluconacetobacter diazotrophicus PAl 5, suggest a new standard in genome sequence submission.</title>
        <authorList>
            <person name="Giongo A."/>
            <person name="Tyler H.L."/>
            <person name="Zipperer U.N."/>
            <person name="Triplett E.W."/>
        </authorList>
    </citation>
    <scope>NUCLEOTIDE SEQUENCE [LARGE SCALE GENOMIC DNA]</scope>
    <source>
        <strain>ATCC 49037 / DSM 5601 / CCUG 37298 / CIP 103539 / LMG 7603 / PAl5</strain>
    </source>
</reference>
<gene>
    <name evidence="1" type="primary">thrB</name>
    <name type="ordered locus">GDI3101</name>
    <name type="ordered locus">Gdia_3266</name>
</gene>
<evidence type="ECO:0000255" key="1">
    <source>
        <dbReference type="HAMAP-Rule" id="MF_00301"/>
    </source>
</evidence>